<organism>
    <name type="scientific">Encephalitozoon cuniculi (strain GB-M1)</name>
    <name type="common">Microsporidian parasite</name>
    <dbReference type="NCBI Taxonomy" id="284813"/>
    <lineage>
        <taxon>Eukaryota</taxon>
        <taxon>Fungi</taxon>
        <taxon>Fungi incertae sedis</taxon>
        <taxon>Microsporidia</taxon>
        <taxon>Unikaryonidae</taxon>
        <taxon>Encephalitozoon</taxon>
    </lineage>
</organism>
<accession>Q8SRE2</accession>
<feature type="chain" id="PRO_0000071933" description="Histone H2B">
    <location>
        <begin position="1"/>
        <end position="130"/>
    </location>
</feature>
<feature type="region of interest" description="Disordered" evidence="2">
    <location>
        <begin position="1"/>
        <end position="31"/>
    </location>
</feature>
<feature type="cross-link" description="Glycyl lysine isopeptide (Lys-Gly) (interchain with G-Cter in ubiquitin)" evidence="1">
    <location>
        <position position="122"/>
    </location>
</feature>
<comment type="function">
    <text>Core component of nucleosome. Nucleosomes wrap and compact DNA into chromatin, limiting DNA accessibility to the cellular machineries which require DNA as a template. Histones thereby play a central role in transcription regulation, DNA repair, DNA replication and chromosomal stability. DNA accessibility is regulated via a complex set of post-translational modifications of histones, also called histone code, and nucleosome remodeling.</text>
</comment>
<comment type="subunit">
    <text>The nucleosome is a histone octamer containing two molecules each of H2A, H2B, H3 and H4 assembled in one H3-H4 heterotetramer and two H2A-H2B heterodimers. The octamer wraps approximately 147 bp of DNA.</text>
</comment>
<comment type="subcellular location">
    <subcellularLocation>
        <location evidence="1">Nucleus</location>
    </subcellularLocation>
    <subcellularLocation>
        <location evidence="1">Chromosome</location>
    </subcellularLocation>
</comment>
<comment type="developmental stage">
    <text evidence="3">Expressed in late sporogonial stages.</text>
</comment>
<comment type="PTM">
    <text evidence="1">Monoubiquitinated to form H2BK123ub1. H2BK123ub1 gives a specific tag for epigenetic transcriptional activation and is also prerequisite for H3K4me and H3K79me formation (By similarity).</text>
</comment>
<comment type="similarity">
    <text evidence="4">Belongs to the histone H2B family.</text>
</comment>
<comment type="caution">
    <text evidence="4">To ensure consistency between histone entries, we follow the 'Brno' nomenclature for histone modifications, with positions referring to those used in the literature for the 'closest' model organism. Due to slight variations in histone sequences between organisms and to the presence of initiator methionine in UniProtKB/Swiss-Prot sequences, the actual positions of modified amino acids in the sequence generally differ. In this entry the following conventions are used: H2BK123ub1 = monoubiquitinated Lys-122.</text>
</comment>
<reference key="1">
    <citation type="journal article" date="2001" name="Nature">
        <title>Genome sequence and gene compaction of the eukaryote parasite Encephalitozoon cuniculi.</title>
        <authorList>
            <person name="Katinka M.D."/>
            <person name="Duprat S."/>
            <person name="Cornillot E."/>
            <person name="Metenier G."/>
            <person name="Thomarat F."/>
            <person name="Prensier G."/>
            <person name="Barbe V."/>
            <person name="Peyretaillade E."/>
            <person name="Brottier P."/>
            <person name="Wincker P."/>
            <person name="Delbac F."/>
            <person name="El Alaoui H."/>
            <person name="Peyret P."/>
            <person name="Saurin W."/>
            <person name="Gouy M."/>
            <person name="Weissenbach J."/>
            <person name="Vivares C.P."/>
        </authorList>
    </citation>
    <scope>NUCLEOTIDE SEQUENCE [LARGE SCALE GENOMIC DNA]</scope>
    <source>
        <strain>GB-M1</strain>
    </source>
</reference>
<reference key="2">
    <citation type="journal article" date="2006" name="Proteomics">
        <title>Proteomic analysis of the eukaryotic parasite Encephalitozoon cuniculi (microsporidia): a reference map for proteins expressed in late sporogonial stages.</title>
        <authorList>
            <person name="Brosson D."/>
            <person name="Kuhn L."/>
            <person name="Delbac F."/>
            <person name="Garin J."/>
            <person name="Vivares C.P."/>
            <person name="Texier C."/>
        </authorList>
    </citation>
    <scope>IDENTIFICATION BY MASS SPECTROMETRY [LARGE SCALE ANALYSIS]</scope>
    <scope>DEVELOPMENTAL STAGE</scope>
</reference>
<sequence>MAKSARHVTGKAPSSLDAHDRKKSKKKSSSMCVGSMFKSAVKRISREVSPDNNIMLTSNSIQVLCGISYDFVDTVADLAGELARKVGKQTVGSDDIISAFEILLKGELRKLAIREVHNALSKSQAKSRGK</sequence>
<keyword id="KW-0158">Chromosome</keyword>
<keyword id="KW-0238">DNA-binding</keyword>
<keyword id="KW-1017">Isopeptide bond</keyword>
<keyword id="KW-0544">Nucleosome core</keyword>
<keyword id="KW-0539">Nucleus</keyword>
<keyword id="KW-1185">Reference proteome</keyword>
<keyword id="KW-0832">Ubl conjugation</keyword>
<gene>
    <name type="primary">HTB1</name>
    <name type="ordered locus">ECU08_0410</name>
</gene>
<dbReference type="EMBL" id="AL590448">
    <property type="protein sequence ID" value="CAD26346.1"/>
    <property type="molecule type" value="Genomic_DNA"/>
</dbReference>
<dbReference type="RefSeq" id="NP_597170.1">
    <property type="nucleotide sequence ID" value="NM_001041779.1"/>
</dbReference>
<dbReference type="SMR" id="Q8SRE2"/>
<dbReference type="FunCoup" id="Q8SRE2">
    <property type="interactions" value="93"/>
</dbReference>
<dbReference type="STRING" id="284813.Q8SRE2"/>
<dbReference type="GeneID" id="859592"/>
<dbReference type="KEGG" id="ecu:ECU08_0410"/>
<dbReference type="VEuPathDB" id="MicrosporidiaDB:ECU08_0410"/>
<dbReference type="HOGENOM" id="CLU_157385_0_0_1"/>
<dbReference type="InParanoid" id="Q8SRE2"/>
<dbReference type="OMA" id="LCVREIK"/>
<dbReference type="OrthoDB" id="2191729at2759"/>
<dbReference type="Proteomes" id="UP000000819">
    <property type="component" value="Chromosome VIII"/>
</dbReference>
<dbReference type="GO" id="GO:0000786">
    <property type="term" value="C:nucleosome"/>
    <property type="evidence" value="ECO:0007669"/>
    <property type="project" value="UniProtKB-KW"/>
</dbReference>
<dbReference type="GO" id="GO:0005634">
    <property type="term" value="C:nucleus"/>
    <property type="evidence" value="ECO:0007669"/>
    <property type="project" value="UniProtKB-SubCell"/>
</dbReference>
<dbReference type="GO" id="GO:0003677">
    <property type="term" value="F:DNA binding"/>
    <property type="evidence" value="ECO:0007669"/>
    <property type="project" value="UniProtKB-KW"/>
</dbReference>
<dbReference type="GO" id="GO:0046982">
    <property type="term" value="F:protein heterodimerization activity"/>
    <property type="evidence" value="ECO:0007669"/>
    <property type="project" value="InterPro"/>
</dbReference>
<dbReference type="Gene3D" id="1.10.20.10">
    <property type="entry name" value="Histone, subunit A"/>
    <property type="match status" value="1"/>
</dbReference>
<dbReference type="InterPro" id="IPR009072">
    <property type="entry name" value="Histone-fold"/>
</dbReference>
<dbReference type="InterPro" id="IPR007125">
    <property type="entry name" value="Histone_H2A/H2B/H3"/>
</dbReference>
<dbReference type="Pfam" id="PF00125">
    <property type="entry name" value="Histone"/>
    <property type="match status" value="1"/>
</dbReference>
<dbReference type="SUPFAM" id="SSF47113">
    <property type="entry name" value="Histone-fold"/>
    <property type="match status" value="1"/>
</dbReference>
<proteinExistence type="evidence at protein level"/>
<evidence type="ECO:0000250" key="1"/>
<evidence type="ECO:0000256" key="2">
    <source>
        <dbReference type="SAM" id="MobiDB-lite"/>
    </source>
</evidence>
<evidence type="ECO:0000269" key="3">
    <source>
    </source>
</evidence>
<evidence type="ECO:0000305" key="4"/>
<protein>
    <recommendedName>
        <fullName>Histone H2B</fullName>
    </recommendedName>
</protein>
<name>H2B_ENCCU</name>